<dbReference type="EMBL" id="CP000916">
    <property type="protein sequence ID" value="ACM23901.1"/>
    <property type="molecule type" value="Genomic_DNA"/>
</dbReference>
<dbReference type="RefSeq" id="WP_015920139.1">
    <property type="nucleotide sequence ID" value="NC_011978.1"/>
</dbReference>
<dbReference type="SMR" id="B9KAB8"/>
<dbReference type="STRING" id="309803.CTN_1725"/>
<dbReference type="KEGG" id="tna:CTN_1725"/>
<dbReference type="eggNOG" id="COG0576">
    <property type="taxonomic scope" value="Bacteria"/>
</dbReference>
<dbReference type="HOGENOM" id="CLU_057217_5_2_0"/>
<dbReference type="Proteomes" id="UP000000445">
    <property type="component" value="Chromosome"/>
</dbReference>
<dbReference type="GO" id="GO:0005737">
    <property type="term" value="C:cytoplasm"/>
    <property type="evidence" value="ECO:0007669"/>
    <property type="project" value="UniProtKB-SubCell"/>
</dbReference>
<dbReference type="GO" id="GO:0000774">
    <property type="term" value="F:adenyl-nucleotide exchange factor activity"/>
    <property type="evidence" value="ECO:0007669"/>
    <property type="project" value="InterPro"/>
</dbReference>
<dbReference type="GO" id="GO:0042803">
    <property type="term" value="F:protein homodimerization activity"/>
    <property type="evidence" value="ECO:0007669"/>
    <property type="project" value="InterPro"/>
</dbReference>
<dbReference type="GO" id="GO:0051087">
    <property type="term" value="F:protein-folding chaperone binding"/>
    <property type="evidence" value="ECO:0007669"/>
    <property type="project" value="InterPro"/>
</dbReference>
<dbReference type="GO" id="GO:0051082">
    <property type="term" value="F:unfolded protein binding"/>
    <property type="evidence" value="ECO:0007669"/>
    <property type="project" value="TreeGrafter"/>
</dbReference>
<dbReference type="GO" id="GO:0006457">
    <property type="term" value="P:protein folding"/>
    <property type="evidence" value="ECO:0007669"/>
    <property type="project" value="InterPro"/>
</dbReference>
<dbReference type="CDD" id="cd00446">
    <property type="entry name" value="GrpE"/>
    <property type="match status" value="1"/>
</dbReference>
<dbReference type="Gene3D" id="3.90.20.20">
    <property type="match status" value="1"/>
</dbReference>
<dbReference type="Gene3D" id="2.30.22.10">
    <property type="entry name" value="Head domain of nucleotide exchange factor GrpE"/>
    <property type="match status" value="1"/>
</dbReference>
<dbReference type="HAMAP" id="MF_01151">
    <property type="entry name" value="GrpE"/>
    <property type="match status" value="1"/>
</dbReference>
<dbReference type="InterPro" id="IPR000740">
    <property type="entry name" value="GrpE"/>
</dbReference>
<dbReference type="InterPro" id="IPR013805">
    <property type="entry name" value="GrpE_coiled_coil"/>
</dbReference>
<dbReference type="InterPro" id="IPR009012">
    <property type="entry name" value="GrpE_head"/>
</dbReference>
<dbReference type="PANTHER" id="PTHR21237">
    <property type="entry name" value="GRPE PROTEIN"/>
    <property type="match status" value="1"/>
</dbReference>
<dbReference type="PANTHER" id="PTHR21237:SF23">
    <property type="entry name" value="GRPE PROTEIN HOMOLOG, MITOCHONDRIAL"/>
    <property type="match status" value="1"/>
</dbReference>
<dbReference type="Pfam" id="PF01025">
    <property type="entry name" value="GrpE"/>
    <property type="match status" value="1"/>
</dbReference>
<dbReference type="PRINTS" id="PR00773">
    <property type="entry name" value="GRPEPROTEIN"/>
</dbReference>
<dbReference type="SUPFAM" id="SSF58014">
    <property type="entry name" value="Coiled-coil domain of nucleotide exchange factor GrpE"/>
    <property type="match status" value="1"/>
</dbReference>
<dbReference type="SUPFAM" id="SSF51064">
    <property type="entry name" value="Head domain of nucleotide exchange factor GrpE"/>
    <property type="match status" value="1"/>
</dbReference>
<organism>
    <name type="scientific">Thermotoga neapolitana (strain ATCC 49049 / DSM 4359 / NBRC 107923 / NS-E)</name>
    <dbReference type="NCBI Taxonomy" id="309803"/>
    <lineage>
        <taxon>Bacteria</taxon>
        <taxon>Thermotogati</taxon>
        <taxon>Thermotogota</taxon>
        <taxon>Thermotogae</taxon>
        <taxon>Thermotogales</taxon>
        <taxon>Thermotogaceae</taxon>
        <taxon>Thermotoga</taxon>
    </lineage>
</organism>
<name>GRPE_THENN</name>
<evidence type="ECO:0000255" key="1">
    <source>
        <dbReference type="HAMAP-Rule" id="MF_01151"/>
    </source>
</evidence>
<comment type="function">
    <text evidence="1">Participates actively in the response to hyperosmotic and heat shock by preventing the aggregation of stress-denatured proteins, in association with DnaK and GrpE. It is the nucleotide exchange factor for DnaK and may function as a thermosensor. Unfolded proteins bind initially to DnaJ; upon interaction with the DnaJ-bound protein, DnaK hydrolyzes its bound ATP, resulting in the formation of a stable complex. GrpE releases ADP from DnaK; ATP binding to DnaK triggers the release of the substrate protein, thus completing the reaction cycle. Several rounds of ATP-dependent interactions between DnaJ, DnaK and GrpE are required for fully efficient folding.</text>
</comment>
<comment type="subunit">
    <text evidence="1">Homodimer.</text>
</comment>
<comment type="subcellular location">
    <subcellularLocation>
        <location evidence="1">Cytoplasm</location>
    </subcellularLocation>
</comment>
<comment type="similarity">
    <text evidence="1">Belongs to the GrpE family.</text>
</comment>
<reference key="1">
    <citation type="submission" date="2007-11" db="EMBL/GenBank/DDBJ databases">
        <title>The genome sequence of the hyperthermophilic bacterium Thermotoga neapolitana.</title>
        <authorList>
            <person name="Lim S.K."/>
            <person name="Kim J.S."/>
            <person name="Cha S.H."/>
            <person name="Park B.C."/>
            <person name="Lee D.S."/>
            <person name="Tae H.S."/>
            <person name="Kim S.-J."/>
            <person name="Kim J.J."/>
            <person name="Park K.J."/>
            <person name="Lee S.Y."/>
        </authorList>
    </citation>
    <scope>NUCLEOTIDE SEQUENCE [LARGE SCALE GENOMIC DNA]</scope>
    <source>
        <strain>ATCC 49049 / DSM 4359 / NBRC 107923 / NS-E</strain>
    </source>
</reference>
<protein>
    <recommendedName>
        <fullName evidence="1">Protein GrpE</fullName>
    </recommendedName>
    <alternativeName>
        <fullName evidence="1">HSP-70 cofactor</fullName>
    </alternativeName>
</protein>
<feature type="chain" id="PRO_1000164226" description="Protein GrpE">
    <location>
        <begin position="1"/>
        <end position="168"/>
    </location>
</feature>
<accession>B9KAB8</accession>
<proteinExistence type="inferred from homology"/>
<keyword id="KW-0143">Chaperone</keyword>
<keyword id="KW-0963">Cytoplasm</keyword>
<keyword id="KW-0346">Stress response</keyword>
<gene>
    <name evidence="1" type="primary">grpE</name>
    <name type="ordered locus">CTN_1725</name>
</gene>
<sequence length="168" mass="20059">MSEKEKKDLSQECEELKEKYRELEEYAKRLKAEYENYREEVAREKRELIKNANEYLISRLIPILDDFERALNQKDHEESFYEGVKLIYKKLLNTLEKEGLSKIQVGETFDPFEYEAVERVETDDVEEYTVLEVLESGYKFHGKVLKPAKVKVAVRPRKKDEESPDKKE</sequence>